<name>GMHA_BURP1</name>
<reference key="1">
    <citation type="journal article" date="2010" name="Genome Biol. Evol.">
        <title>Continuing evolution of Burkholderia mallei through genome reduction and large-scale rearrangements.</title>
        <authorList>
            <person name="Losada L."/>
            <person name="Ronning C.M."/>
            <person name="DeShazer D."/>
            <person name="Woods D."/>
            <person name="Fedorova N."/>
            <person name="Kim H.S."/>
            <person name="Shabalina S.A."/>
            <person name="Pearson T.R."/>
            <person name="Brinkac L."/>
            <person name="Tan P."/>
            <person name="Nandi T."/>
            <person name="Crabtree J."/>
            <person name="Badger J."/>
            <person name="Beckstrom-Sternberg S."/>
            <person name="Saqib M."/>
            <person name="Schutzer S.E."/>
            <person name="Keim P."/>
            <person name="Nierman W.C."/>
        </authorList>
    </citation>
    <scope>NUCLEOTIDE SEQUENCE [LARGE SCALE GENOMIC DNA]</scope>
    <source>
        <strain>1710b</strain>
    </source>
</reference>
<sequence>MENRELTYITNSIAEAQRVMAAMLADERLLATVQKVADACIASIAQGGKVLLAGNGGSAADAQHIAGEFVSRFAFDRPGLPAVALTTDTSILTAIGNDYGYEKLFSRQVQALGNKGDVLIGYSTSGKSPNILAAFREAKAKGMTCVGFTGNRGGEMRELCDLLLEVPSADTPKIQEGHLVLGHIVCGLVEHSIFGKQ</sequence>
<keyword id="KW-0119">Carbohydrate metabolism</keyword>
<keyword id="KW-0963">Cytoplasm</keyword>
<keyword id="KW-0413">Isomerase</keyword>
<keyword id="KW-0479">Metal-binding</keyword>
<keyword id="KW-0862">Zinc</keyword>
<gene>
    <name evidence="1" type="primary">gmhA</name>
    <name type="ordered locus">BURPS1710b_3291</name>
</gene>
<protein>
    <recommendedName>
        <fullName evidence="1">Phosphoheptose isomerase</fullName>
        <ecNumber evidence="1">5.3.1.28</ecNumber>
    </recommendedName>
    <alternativeName>
        <fullName evidence="1">Sedoheptulose 7-phosphate isomerase</fullName>
    </alternativeName>
</protein>
<proteinExistence type="inferred from homology"/>
<evidence type="ECO:0000255" key="1">
    <source>
        <dbReference type="HAMAP-Rule" id="MF_00067"/>
    </source>
</evidence>
<dbReference type="EC" id="5.3.1.28" evidence="1"/>
<dbReference type="EMBL" id="CP000124">
    <property type="protein sequence ID" value="ABA47697.1"/>
    <property type="molecule type" value="Genomic_DNA"/>
</dbReference>
<dbReference type="RefSeq" id="WP_004194315.1">
    <property type="nucleotide sequence ID" value="NC_007434.1"/>
</dbReference>
<dbReference type="SMR" id="Q3JP41"/>
<dbReference type="EnsemblBacteria" id="ABA47697">
    <property type="protein sequence ID" value="ABA47697"/>
    <property type="gene ID" value="BURPS1710b_3291"/>
</dbReference>
<dbReference type="GeneID" id="93061384"/>
<dbReference type="KEGG" id="bpm:BURPS1710b_3291"/>
<dbReference type="HOGENOM" id="CLU_080999_0_1_4"/>
<dbReference type="UniPathway" id="UPA00041">
    <property type="reaction ID" value="UER00436"/>
</dbReference>
<dbReference type="Proteomes" id="UP000002700">
    <property type="component" value="Chromosome I"/>
</dbReference>
<dbReference type="GO" id="GO:0005737">
    <property type="term" value="C:cytoplasm"/>
    <property type="evidence" value="ECO:0007669"/>
    <property type="project" value="UniProtKB-SubCell"/>
</dbReference>
<dbReference type="GO" id="GO:0097367">
    <property type="term" value="F:carbohydrate derivative binding"/>
    <property type="evidence" value="ECO:0007669"/>
    <property type="project" value="InterPro"/>
</dbReference>
<dbReference type="GO" id="GO:0008968">
    <property type="term" value="F:D-sedoheptulose 7-phosphate isomerase activity"/>
    <property type="evidence" value="ECO:0007669"/>
    <property type="project" value="UniProtKB-UniRule"/>
</dbReference>
<dbReference type="GO" id="GO:0008270">
    <property type="term" value="F:zinc ion binding"/>
    <property type="evidence" value="ECO:0007669"/>
    <property type="project" value="UniProtKB-UniRule"/>
</dbReference>
<dbReference type="GO" id="GO:0005975">
    <property type="term" value="P:carbohydrate metabolic process"/>
    <property type="evidence" value="ECO:0007669"/>
    <property type="project" value="UniProtKB-UniRule"/>
</dbReference>
<dbReference type="GO" id="GO:2001061">
    <property type="term" value="P:D-glycero-D-manno-heptose 7-phosphate biosynthetic process"/>
    <property type="evidence" value="ECO:0007669"/>
    <property type="project" value="UniProtKB-UniPathway"/>
</dbReference>
<dbReference type="CDD" id="cd05006">
    <property type="entry name" value="SIS_GmhA"/>
    <property type="match status" value="1"/>
</dbReference>
<dbReference type="Gene3D" id="3.40.50.10490">
    <property type="entry name" value="Glucose-6-phosphate isomerase like protein, domain 1"/>
    <property type="match status" value="1"/>
</dbReference>
<dbReference type="HAMAP" id="MF_00067">
    <property type="entry name" value="GmhA"/>
    <property type="match status" value="1"/>
</dbReference>
<dbReference type="InterPro" id="IPR035461">
    <property type="entry name" value="GmhA/DiaA"/>
</dbReference>
<dbReference type="InterPro" id="IPR004515">
    <property type="entry name" value="Phosphoheptose_Isoase"/>
</dbReference>
<dbReference type="InterPro" id="IPR001347">
    <property type="entry name" value="SIS_dom"/>
</dbReference>
<dbReference type="InterPro" id="IPR046348">
    <property type="entry name" value="SIS_dom_sf"/>
</dbReference>
<dbReference type="InterPro" id="IPR050099">
    <property type="entry name" value="SIS_GmhA/DiaA_subfam"/>
</dbReference>
<dbReference type="PANTHER" id="PTHR30390:SF6">
    <property type="entry name" value="DNAA INITIATOR-ASSOCIATING PROTEIN DIAA"/>
    <property type="match status" value="1"/>
</dbReference>
<dbReference type="PANTHER" id="PTHR30390">
    <property type="entry name" value="SEDOHEPTULOSE 7-PHOSPHATE ISOMERASE / DNAA INITIATOR-ASSOCIATING FACTOR FOR REPLICATION INITIATION"/>
    <property type="match status" value="1"/>
</dbReference>
<dbReference type="Pfam" id="PF13580">
    <property type="entry name" value="SIS_2"/>
    <property type="match status" value="1"/>
</dbReference>
<dbReference type="SUPFAM" id="SSF53697">
    <property type="entry name" value="SIS domain"/>
    <property type="match status" value="1"/>
</dbReference>
<dbReference type="PROSITE" id="PS51464">
    <property type="entry name" value="SIS"/>
    <property type="match status" value="1"/>
</dbReference>
<feature type="chain" id="PRO_1000009055" description="Phosphoheptose isomerase">
    <location>
        <begin position="1"/>
        <end position="197"/>
    </location>
</feature>
<feature type="domain" description="SIS" evidence="1">
    <location>
        <begin position="40"/>
        <end position="197"/>
    </location>
</feature>
<feature type="binding site" evidence="1">
    <location>
        <begin position="55"/>
        <end position="57"/>
    </location>
    <ligand>
        <name>substrate</name>
    </ligand>
</feature>
<feature type="binding site" evidence="1">
    <location>
        <position position="64"/>
    </location>
    <ligand>
        <name>Zn(2+)</name>
        <dbReference type="ChEBI" id="CHEBI:29105"/>
    </ligand>
</feature>
<feature type="binding site" evidence="1">
    <location>
        <position position="68"/>
    </location>
    <ligand>
        <name>substrate</name>
    </ligand>
</feature>
<feature type="binding site" evidence="1">
    <location>
        <position position="68"/>
    </location>
    <ligand>
        <name>Zn(2+)</name>
        <dbReference type="ChEBI" id="CHEBI:29105"/>
    </ligand>
</feature>
<feature type="binding site" evidence="1">
    <location>
        <begin position="97"/>
        <end position="98"/>
    </location>
    <ligand>
        <name>substrate</name>
    </ligand>
</feature>
<feature type="binding site" evidence="1">
    <location>
        <begin position="123"/>
        <end position="125"/>
    </location>
    <ligand>
        <name>substrate</name>
    </ligand>
</feature>
<feature type="binding site" evidence="1">
    <location>
        <position position="128"/>
    </location>
    <ligand>
        <name>substrate</name>
    </ligand>
</feature>
<feature type="binding site" evidence="1">
    <location>
        <position position="175"/>
    </location>
    <ligand>
        <name>substrate</name>
    </ligand>
</feature>
<feature type="binding site" evidence="1">
    <location>
        <position position="175"/>
    </location>
    <ligand>
        <name>Zn(2+)</name>
        <dbReference type="ChEBI" id="CHEBI:29105"/>
    </ligand>
</feature>
<feature type="binding site" evidence="1">
    <location>
        <position position="183"/>
    </location>
    <ligand>
        <name>Zn(2+)</name>
        <dbReference type="ChEBI" id="CHEBI:29105"/>
    </ligand>
</feature>
<comment type="function">
    <text evidence="1">Catalyzes the isomerization of sedoheptulose 7-phosphate in D-glycero-D-manno-heptose 7-phosphate.</text>
</comment>
<comment type="catalytic activity">
    <reaction evidence="1">
        <text>2 D-sedoheptulose 7-phosphate = D-glycero-alpha-D-manno-heptose 7-phosphate + D-glycero-beta-D-manno-heptose 7-phosphate</text>
        <dbReference type="Rhea" id="RHEA:27489"/>
        <dbReference type="ChEBI" id="CHEBI:57483"/>
        <dbReference type="ChEBI" id="CHEBI:60203"/>
        <dbReference type="ChEBI" id="CHEBI:60204"/>
        <dbReference type="EC" id="5.3.1.28"/>
    </reaction>
</comment>
<comment type="cofactor">
    <cofactor evidence="1">
        <name>Zn(2+)</name>
        <dbReference type="ChEBI" id="CHEBI:29105"/>
    </cofactor>
    <text evidence="1">Binds 1 zinc ion per subunit.</text>
</comment>
<comment type="pathway">
    <text evidence="1">Carbohydrate biosynthesis; D-glycero-D-manno-heptose 7-phosphate biosynthesis; D-glycero-alpha-D-manno-heptose 7-phosphate and D-glycero-beta-D-manno-heptose 7-phosphate from sedoheptulose 7-phosphate: step 1/1.</text>
</comment>
<comment type="subunit">
    <text evidence="1">Homotetramer.</text>
</comment>
<comment type="subcellular location">
    <subcellularLocation>
        <location evidence="1">Cytoplasm</location>
    </subcellularLocation>
</comment>
<comment type="miscellaneous">
    <text evidence="1">The reaction produces a racemic mixture of D-glycero-alpha-D-manno-heptose 7-phosphate and D-glycero-beta-D-manno-heptose 7-phosphate.</text>
</comment>
<comment type="similarity">
    <text evidence="1">Belongs to the SIS family. GmhA subfamily.</text>
</comment>
<organism>
    <name type="scientific">Burkholderia pseudomallei (strain 1710b)</name>
    <dbReference type="NCBI Taxonomy" id="320372"/>
    <lineage>
        <taxon>Bacteria</taxon>
        <taxon>Pseudomonadati</taxon>
        <taxon>Pseudomonadota</taxon>
        <taxon>Betaproteobacteria</taxon>
        <taxon>Burkholderiales</taxon>
        <taxon>Burkholderiaceae</taxon>
        <taxon>Burkholderia</taxon>
        <taxon>pseudomallei group</taxon>
    </lineage>
</organism>
<accession>Q3JP41</accession>